<accession>Q7Z090</accession>
<accession>D6C4H1</accession>
<sequence length="75" mass="8476">MKLCLTFLLVLMILASVTGEKLSEQTLRRAARKNKGPRCWVGRVHCTYHKDCCPSVCCFKGRCKPQSWGCWSGPT</sequence>
<reference key="1">
    <citation type="journal article" date="2005" name="FEBS J.">
        <title>Characterization of D-amino-acid-containing excitatory conotoxins and redefinition of the I-conotoxin superfamily.</title>
        <authorList>
            <person name="Buczek O."/>
            <person name="Yoshikami D."/>
            <person name="Watkins M."/>
            <person name="Bulaj G."/>
            <person name="Jimenez E.C."/>
            <person name="Olivera B.M."/>
        </authorList>
    </citation>
    <scope>NUCLEOTIDE SEQUENCE [MRNA]</scope>
    <source>
        <tissue>Venom duct</tissue>
    </source>
</reference>
<reference key="2">
    <citation type="journal article" date="2010" name="Mol. Phylogenet. Evol.">
        <title>Evolution of Conus peptide toxins: analysis of Conus californicus Reeve, 1844.</title>
        <authorList>
            <person name="Biggs J.S."/>
            <person name="Watkins M."/>
            <person name="Puillandre N."/>
            <person name="Ownby J.P."/>
            <person name="Lopez-Vera E."/>
            <person name="Christensen S."/>
            <person name="Moreno K.J."/>
            <person name="Bernaldez J."/>
            <person name="Licea-Navarro A."/>
            <person name="Corneli P.S."/>
            <person name="Olivera B.M."/>
        </authorList>
    </citation>
    <scope>NUCLEOTIDE SEQUENCE [GENOMIC DNA]</scope>
</reference>
<reference key="3">
    <citation type="journal article" date="2003" name="J. Neurochem.">
        <title>Novel excitatory Conus peptides define a new conotoxin superfamily.</title>
        <authorList>
            <person name="Jimenez E.C."/>
            <person name="Shetty R.P."/>
            <person name="Lirazan M."/>
            <person name="Rivier J."/>
            <person name="Walker C."/>
            <person name="Abogadie F.C."/>
            <person name="Yoshikami D."/>
            <person name="Cruz L.J."/>
            <person name="Olivera B.M."/>
        </authorList>
    </citation>
    <scope>NUCLEOTIDE SEQUENCE [MRNA] OF 36-75</scope>
    <source>
        <tissue>Venom duct</tissue>
    </source>
</reference>
<reference key="4">
    <citation type="journal article" date="2005" name="FEBS J.">
        <authorList>
            <person name="Buczek O."/>
            <person name="Yoshikami D."/>
            <person name="Watkins M."/>
            <person name="Bulaj G."/>
            <person name="Jimenez E.C."/>
            <person name="Olivera B.M."/>
        </authorList>
    </citation>
    <scope>ERRATUM OF PUBMED:12694387</scope>
</reference>
<evidence type="ECO:0000250" key="1"/>
<evidence type="ECO:0000250" key="2">
    <source>
        <dbReference type="UniProtKB" id="Q7Z094"/>
    </source>
</evidence>
<evidence type="ECO:0000255" key="3"/>
<evidence type="ECO:0000305" key="4"/>
<comment type="function">
    <text evidence="1">Iota-conotoxins bind to voltage-gated sodium channels (Nav) and act as agonists by shifting the voltage-dependence of activation to more hyperpolarized levels. Produces general excitatory symptoms (By similarity).</text>
</comment>
<comment type="subcellular location">
    <subcellularLocation>
        <location evidence="1">Secreted</location>
    </subcellularLocation>
</comment>
<comment type="tissue specificity">
    <text>Expressed by the venom duct.</text>
</comment>
<comment type="domain">
    <text>The cysteine framework is XI (C-C-CC-CC-C-C).</text>
</comment>
<comment type="similarity">
    <text evidence="4">Belongs to the conotoxin I1 superfamily.</text>
</comment>
<keyword id="KW-0165">Cleavage on pair of basic residues</keyword>
<keyword id="KW-1015">Disulfide bond</keyword>
<keyword id="KW-0872">Ion channel impairing toxin</keyword>
<keyword id="KW-0528">Neurotoxin</keyword>
<keyword id="KW-0964">Secreted</keyword>
<keyword id="KW-0732">Signal</keyword>
<keyword id="KW-0800">Toxin</keyword>
<keyword id="KW-0738">Voltage-gated sodium channel impairing toxin</keyword>
<protein>
    <recommendedName>
        <fullName>Iota-conotoxin-like R11.3</fullName>
    </recommendedName>
</protein>
<organism>
    <name type="scientific">Conus radiatus</name>
    <name type="common">Rayed cone</name>
    <dbReference type="NCBI Taxonomy" id="61198"/>
    <lineage>
        <taxon>Eukaryota</taxon>
        <taxon>Metazoa</taxon>
        <taxon>Spiralia</taxon>
        <taxon>Lophotrochozoa</taxon>
        <taxon>Mollusca</taxon>
        <taxon>Gastropoda</taxon>
        <taxon>Caenogastropoda</taxon>
        <taxon>Neogastropoda</taxon>
        <taxon>Conoidea</taxon>
        <taxon>Conidae</taxon>
        <taxon>Conus</taxon>
        <taxon>Phasmoconus</taxon>
    </lineage>
</organism>
<dbReference type="EMBL" id="AY208963">
    <property type="protein sequence ID" value="AAP41545.1"/>
    <property type="molecule type" value="mRNA"/>
</dbReference>
<dbReference type="EMBL" id="FJ959113">
    <property type="protein sequence ID" value="ADB93083.1"/>
    <property type="molecule type" value="Genomic_DNA"/>
</dbReference>
<dbReference type="ConoServer" id="1410">
    <property type="toxin name" value="R11.3 precursor"/>
</dbReference>
<dbReference type="GO" id="GO:0005576">
    <property type="term" value="C:extracellular region"/>
    <property type="evidence" value="ECO:0007669"/>
    <property type="project" value="UniProtKB-SubCell"/>
</dbReference>
<dbReference type="GO" id="GO:0017080">
    <property type="term" value="F:sodium channel regulator activity"/>
    <property type="evidence" value="ECO:0007669"/>
    <property type="project" value="UniProtKB-KW"/>
</dbReference>
<dbReference type="GO" id="GO:0090729">
    <property type="term" value="F:toxin activity"/>
    <property type="evidence" value="ECO:0007669"/>
    <property type="project" value="UniProtKB-KW"/>
</dbReference>
<dbReference type="InterPro" id="IPR013141">
    <property type="entry name" value="Conotoxin-I_CS"/>
</dbReference>
<dbReference type="InterPro" id="IPR012624">
    <property type="entry name" value="Toxin_19"/>
</dbReference>
<dbReference type="Pfam" id="PF08088">
    <property type="entry name" value="Toxin_19"/>
    <property type="match status" value="1"/>
</dbReference>
<dbReference type="PROSITE" id="PS60019">
    <property type="entry name" value="I_CONOTOXIN"/>
    <property type="match status" value="1"/>
</dbReference>
<proteinExistence type="evidence at transcript level"/>
<name>I1B3_CONRA</name>
<feature type="signal peptide" evidence="3">
    <location>
        <begin position="1"/>
        <end position="19"/>
    </location>
</feature>
<feature type="propeptide" id="PRO_0000262447" evidence="1">
    <location>
        <begin position="20"/>
        <end position="34"/>
    </location>
</feature>
<feature type="chain" id="PRO_0000044882" description="Iota-conotoxin-like R11.3">
    <location>
        <begin position="36"/>
        <end position="75"/>
    </location>
</feature>
<feature type="disulfide bond" evidence="2">
    <location>
        <begin position="39"/>
        <end position="53"/>
    </location>
</feature>
<feature type="disulfide bond" evidence="2">
    <location>
        <begin position="46"/>
        <end position="58"/>
    </location>
</feature>
<feature type="disulfide bond" evidence="2">
    <location>
        <begin position="52"/>
        <end position="63"/>
    </location>
</feature>
<feature type="disulfide bond" evidence="2">
    <location>
        <begin position="57"/>
        <end position="70"/>
    </location>
</feature>